<gene>
    <name evidence="1" type="primary">tilS</name>
    <name type="synonym">mesJ</name>
    <name type="ordered locus">HI_0404</name>
</gene>
<accession>P44689</accession>
<comment type="function">
    <text evidence="1">Ligates lysine onto the cytidine present at position 34 of the AUA codon-specific tRNA(Ile) that contains the anticodon CAU, in an ATP-dependent manner. Cytidine is converted to lysidine, thus changing the amino acid specificity of the tRNA from methionine to isoleucine.</text>
</comment>
<comment type="catalytic activity">
    <reaction evidence="1">
        <text>cytidine(34) in tRNA(Ile2) + L-lysine + ATP = lysidine(34) in tRNA(Ile2) + AMP + diphosphate + H(+)</text>
        <dbReference type="Rhea" id="RHEA:43744"/>
        <dbReference type="Rhea" id="RHEA-COMP:10625"/>
        <dbReference type="Rhea" id="RHEA-COMP:10670"/>
        <dbReference type="ChEBI" id="CHEBI:15378"/>
        <dbReference type="ChEBI" id="CHEBI:30616"/>
        <dbReference type="ChEBI" id="CHEBI:32551"/>
        <dbReference type="ChEBI" id="CHEBI:33019"/>
        <dbReference type="ChEBI" id="CHEBI:82748"/>
        <dbReference type="ChEBI" id="CHEBI:83665"/>
        <dbReference type="ChEBI" id="CHEBI:456215"/>
        <dbReference type="EC" id="6.3.4.19"/>
    </reaction>
</comment>
<comment type="subcellular location">
    <subcellularLocation>
        <location evidence="1">Cytoplasm</location>
    </subcellularLocation>
</comment>
<comment type="domain">
    <text>The N-terminal region contains the highly conserved SGGXDS motif, predicted to be a P-loop motif involved in ATP binding.</text>
</comment>
<comment type="similarity">
    <text evidence="1">Belongs to the tRNA(Ile)-lysidine synthase family.</text>
</comment>
<feature type="chain" id="PRO_0000181701" description="tRNA(Ile)-lysidine synthase">
    <location>
        <begin position="1"/>
        <end position="430"/>
    </location>
</feature>
<feature type="binding site" evidence="1">
    <location>
        <begin position="24"/>
        <end position="29"/>
    </location>
    <ligand>
        <name>ATP</name>
        <dbReference type="ChEBI" id="CHEBI:30616"/>
    </ligand>
</feature>
<sequence length="430" mass="50053">MDLLSDIEKQLQKATAQAFLIALSGGLDSTVLLSLFAKLCQKQPHLPPLSIRAIHIHHGLSPNADSWAKHCQDLCDQFQIPLIIERVQVDKTNGIEAGAREARYQAIKKYLQTQEMLVTAHHLNDQTETFFLALKRGSGLKGLGAMQQQSVLFGMPILRPLLGFTRTQLENYAQKEKLNWITDESNEDNRYDRNFLRNEILPELRERWAHFDLAVQRSAQHCFEQQQLINDLLSEIFTEHCQIKNQFKLCQFRQYSLAKQTALLRMWLAENQLEMPSKRQLTQLINDVIFAKEEANPQFQLVNKVIRRYQDSLYLTKPFSDLTKCTLKLEQNTLNLPDDLGNLTVQENEHNLIFYWQDYSVTLEKTNLPISIRFGYSGKVKHYPKRPREDIKKIWQELGVPPWERNRIPLIFYGNELKSAVGFFRVLKSS</sequence>
<keyword id="KW-0067">ATP-binding</keyword>
<keyword id="KW-0963">Cytoplasm</keyword>
<keyword id="KW-0436">Ligase</keyword>
<keyword id="KW-0547">Nucleotide-binding</keyword>
<keyword id="KW-1185">Reference proteome</keyword>
<keyword id="KW-0819">tRNA processing</keyword>
<dbReference type="EC" id="6.3.4.19" evidence="1"/>
<dbReference type="EMBL" id="L42023">
    <property type="protein sequence ID" value="AAC22063.1"/>
    <property type="molecule type" value="Genomic_DNA"/>
</dbReference>
<dbReference type="PIR" id="D64151">
    <property type="entry name" value="D64151"/>
</dbReference>
<dbReference type="RefSeq" id="NP_438566.1">
    <property type="nucleotide sequence ID" value="NC_000907.1"/>
</dbReference>
<dbReference type="SMR" id="P44689"/>
<dbReference type="STRING" id="71421.HI_0404"/>
<dbReference type="EnsemblBacteria" id="AAC22063">
    <property type="protein sequence ID" value="AAC22063"/>
    <property type="gene ID" value="HI_0404"/>
</dbReference>
<dbReference type="KEGG" id="hin:HI_0404"/>
<dbReference type="PATRIC" id="fig|71421.8.peg.423"/>
<dbReference type="eggNOG" id="COG0037">
    <property type="taxonomic scope" value="Bacteria"/>
</dbReference>
<dbReference type="HOGENOM" id="CLU_018869_2_0_6"/>
<dbReference type="OrthoDB" id="9807403at2"/>
<dbReference type="PhylomeDB" id="P44689"/>
<dbReference type="BioCyc" id="HINF71421:G1GJ1-419-MONOMER"/>
<dbReference type="Proteomes" id="UP000000579">
    <property type="component" value="Chromosome"/>
</dbReference>
<dbReference type="GO" id="GO:0005737">
    <property type="term" value="C:cytoplasm"/>
    <property type="evidence" value="ECO:0007669"/>
    <property type="project" value="UniProtKB-SubCell"/>
</dbReference>
<dbReference type="GO" id="GO:0005524">
    <property type="term" value="F:ATP binding"/>
    <property type="evidence" value="ECO:0007669"/>
    <property type="project" value="UniProtKB-UniRule"/>
</dbReference>
<dbReference type="GO" id="GO:0032267">
    <property type="term" value="F:tRNA(Ile)-lysidine synthase activity"/>
    <property type="evidence" value="ECO:0007669"/>
    <property type="project" value="UniProtKB-EC"/>
</dbReference>
<dbReference type="GO" id="GO:0006400">
    <property type="term" value="P:tRNA modification"/>
    <property type="evidence" value="ECO:0007669"/>
    <property type="project" value="UniProtKB-UniRule"/>
</dbReference>
<dbReference type="CDD" id="cd01992">
    <property type="entry name" value="TilS_N"/>
    <property type="match status" value="1"/>
</dbReference>
<dbReference type="Gene3D" id="1.20.59.20">
    <property type="match status" value="1"/>
</dbReference>
<dbReference type="Gene3D" id="3.40.50.620">
    <property type="entry name" value="HUPs"/>
    <property type="match status" value="1"/>
</dbReference>
<dbReference type="HAMAP" id="MF_01161">
    <property type="entry name" value="tRNA_Ile_lys_synt"/>
    <property type="match status" value="1"/>
</dbReference>
<dbReference type="InterPro" id="IPR012796">
    <property type="entry name" value="Lysidine-tRNA-synth_C"/>
</dbReference>
<dbReference type="InterPro" id="IPR014729">
    <property type="entry name" value="Rossmann-like_a/b/a_fold"/>
</dbReference>
<dbReference type="InterPro" id="IPR011063">
    <property type="entry name" value="TilS/TtcA_N"/>
</dbReference>
<dbReference type="InterPro" id="IPR012094">
    <property type="entry name" value="tRNA_Ile_lys_synt"/>
</dbReference>
<dbReference type="InterPro" id="IPR012795">
    <property type="entry name" value="tRNA_Ile_lys_synt_N"/>
</dbReference>
<dbReference type="InterPro" id="IPR015262">
    <property type="entry name" value="tRNA_Ile_lys_synt_subst-bd"/>
</dbReference>
<dbReference type="NCBIfam" id="TIGR02433">
    <property type="entry name" value="lysidine_TilS_C"/>
    <property type="match status" value="1"/>
</dbReference>
<dbReference type="NCBIfam" id="TIGR02432">
    <property type="entry name" value="lysidine_TilS_N"/>
    <property type="match status" value="1"/>
</dbReference>
<dbReference type="PANTHER" id="PTHR43033">
    <property type="entry name" value="TRNA(ILE)-LYSIDINE SYNTHASE-RELATED"/>
    <property type="match status" value="1"/>
</dbReference>
<dbReference type="PANTHER" id="PTHR43033:SF1">
    <property type="entry name" value="TRNA(ILE)-LYSIDINE SYNTHASE-RELATED"/>
    <property type="match status" value="1"/>
</dbReference>
<dbReference type="Pfam" id="PF01171">
    <property type="entry name" value="ATP_bind_3"/>
    <property type="match status" value="1"/>
</dbReference>
<dbReference type="Pfam" id="PF09179">
    <property type="entry name" value="TilS"/>
    <property type="match status" value="1"/>
</dbReference>
<dbReference type="Pfam" id="PF11734">
    <property type="entry name" value="TilS_C"/>
    <property type="match status" value="1"/>
</dbReference>
<dbReference type="SMART" id="SM00977">
    <property type="entry name" value="TilS_C"/>
    <property type="match status" value="1"/>
</dbReference>
<dbReference type="SUPFAM" id="SSF52402">
    <property type="entry name" value="Adenine nucleotide alpha hydrolases-like"/>
    <property type="match status" value="1"/>
</dbReference>
<dbReference type="SUPFAM" id="SSF82829">
    <property type="entry name" value="MesJ substrate recognition domain-like"/>
    <property type="match status" value="1"/>
</dbReference>
<dbReference type="SUPFAM" id="SSF56037">
    <property type="entry name" value="PheT/TilS domain"/>
    <property type="match status" value="1"/>
</dbReference>
<name>TILS_HAEIN</name>
<organism>
    <name type="scientific">Haemophilus influenzae (strain ATCC 51907 / DSM 11121 / KW20 / Rd)</name>
    <dbReference type="NCBI Taxonomy" id="71421"/>
    <lineage>
        <taxon>Bacteria</taxon>
        <taxon>Pseudomonadati</taxon>
        <taxon>Pseudomonadota</taxon>
        <taxon>Gammaproteobacteria</taxon>
        <taxon>Pasteurellales</taxon>
        <taxon>Pasteurellaceae</taxon>
        <taxon>Haemophilus</taxon>
    </lineage>
</organism>
<protein>
    <recommendedName>
        <fullName evidence="1">tRNA(Ile)-lysidine synthase</fullName>
        <ecNumber evidence="1">6.3.4.19</ecNumber>
    </recommendedName>
    <alternativeName>
        <fullName evidence="1">tRNA(Ile)-2-lysyl-cytidine synthase</fullName>
    </alternativeName>
    <alternativeName>
        <fullName evidence="1">tRNA(Ile)-lysidine synthetase</fullName>
    </alternativeName>
</protein>
<proteinExistence type="inferred from homology"/>
<evidence type="ECO:0000255" key="1">
    <source>
        <dbReference type="HAMAP-Rule" id="MF_01161"/>
    </source>
</evidence>
<reference key="1">
    <citation type="journal article" date="1995" name="Science">
        <title>Whole-genome random sequencing and assembly of Haemophilus influenzae Rd.</title>
        <authorList>
            <person name="Fleischmann R.D."/>
            <person name="Adams M.D."/>
            <person name="White O."/>
            <person name="Clayton R.A."/>
            <person name="Kirkness E.F."/>
            <person name="Kerlavage A.R."/>
            <person name="Bult C.J."/>
            <person name="Tomb J.-F."/>
            <person name="Dougherty B.A."/>
            <person name="Merrick J.M."/>
            <person name="McKenney K."/>
            <person name="Sutton G.G."/>
            <person name="FitzHugh W."/>
            <person name="Fields C.A."/>
            <person name="Gocayne J.D."/>
            <person name="Scott J.D."/>
            <person name="Shirley R."/>
            <person name="Liu L.-I."/>
            <person name="Glodek A."/>
            <person name="Kelley J.M."/>
            <person name="Weidman J.F."/>
            <person name="Phillips C.A."/>
            <person name="Spriggs T."/>
            <person name="Hedblom E."/>
            <person name="Cotton M.D."/>
            <person name="Utterback T.R."/>
            <person name="Hanna M.C."/>
            <person name="Nguyen D.T."/>
            <person name="Saudek D.M."/>
            <person name="Brandon R.C."/>
            <person name="Fine L.D."/>
            <person name="Fritchman J.L."/>
            <person name="Fuhrmann J.L."/>
            <person name="Geoghagen N.S.M."/>
            <person name="Gnehm C.L."/>
            <person name="McDonald L.A."/>
            <person name="Small K.V."/>
            <person name="Fraser C.M."/>
            <person name="Smith H.O."/>
            <person name="Venter J.C."/>
        </authorList>
    </citation>
    <scope>NUCLEOTIDE SEQUENCE [LARGE SCALE GENOMIC DNA]</scope>
    <source>
        <strain>ATCC 51907 / DSM 11121 / KW20 / Rd</strain>
    </source>
</reference>